<evidence type="ECO:0000250" key="1"/>
<evidence type="ECO:0000250" key="2">
    <source>
        <dbReference type="UniProtKB" id="Q811B1"/>
    </source>
</evidence>
<evidence type="ECO:0000250" key="3">
    <source>
        <dbReference type="UniProtKB" id="Q86Y38"/>
    </source>
</evidence>
<evidence type="ECO:0000255" key="4"/>
<evidence type="ECO:0000256" key="5">
    <source>
        <dbReference type="SAM" id="MobiDB-lite"/>
    </source>
</evidence>
<evidence type="ECO:0000305" key="6"/>
<protein>
    <recommendedName>
        <fullName>Xylosyltransferase 1</fullName>
        <ecNumber evidence="3">2.4.2.26</ecNumber>
    </recommendedName>
    <alternativeName>
        <fullName>Peptide O-xylosyltransferase 1</fullName>
    </alternativeName>
    <alternativeName>
        <fullName>Xylosyltransferase I</fullName>
    </alternativeName>
</protein>
<sequence>MQAAPCARRLARRSHSALLAALTVLLLQTLVVWNFSSLDSGAGERRGGAAVGGGEQPPPAPRRERRDLPAEPAAARGGGGGGGGCGGGGRGPQARARGGGPGEPRGQQPASRGALPARALDGYFSHRPKEKVRTDSNNENSVPKDFENVDNSNFAPRTQKQKHQPELAKKPPSRQKELLKRKLEQQEKGKGHTFPGKGPGEVLPPGDRAAANSSHGKDVSRPPHARKTGGSSPETKYDQPPKCDISGKEAISALSRAKSKHCRQEIGETYCRHKLGLLMPEKVTRFCPLEGKANKNVQWDEDSVEYMPANPVRIAFVLVVHGRASRQLQRMFKAIYHKDHFYYIHVDKRSNYLHRQVLQVSRQYSNVRVTPWRMATIWGGASLLSTYLQSMRDLLEMTDWPWDFFINLSAADYPIRTNDQLVAFLSRYRDMNFLKSHGRDNARFIRKQGLDRLFLECDAHMWRLGDRRIPEGIAVDGGSDWFLLNRRFVEYVTFSTDDLVTKMKQFYSYTLLPAESFFHTVLENSPHCDTMVDNNLRITNWNRKLGCKCQYKHIVDWCGCSPNDFKPQDFHRFQQTARPTFFARKFEAVVNQEIIGQLDYYLYGNYPAGTPGLRSYWENVYDEPDGIHSLSDVTLTLYHSFARLGLRRAETSLHTDGENSCRYYPMGHPASVHLYFLADRFQGFLIKHHATNLAVSKLETLETWVMPKKVFKIASPPSDFGRLQFSEVGTDWDAKERLFRNFGGLLGPMDEPVGMQKWGKGPNVTVTVIWVDPVNVIAATYDILIESTAEFTHYKPPLNLPLRPGVWTVKILHHWVPVAETKFLVAPLTFSNRQPIKPEEALKLHNGPLRNAYMEQSFQSLNPVLSLPISPAQVEQARRNAASTGTALEGWLDSLVGGMWTAMDICATGPTACPVMQTCSQTAWSSFSPDPKSELGAVKPDGRLR</sequence>
<comment type="function">
    <text evidence="2">Catalyzes the first step in the biosynthesis of chondroitin sulfate and dermatan sulfate proteoglycans, such as DCN. Transfers D-xylose from UDP-D-xylose to specific serine residues of the core protein. Required for normal maturation of chondrocytes during bone development, normal onset of ossification and normal embryonic and postnatal skeleton development, especially of the long bones.</text>
</comment>
<comment type="catalytic activity">
    <reaction evidence="3">
        <text>UDP-alpha-D-xylose + L-seryl-[protein] = 3-O-(beta-D-xylosyl)-L-seryl-[protein] + UDP + H(+)</text>
        <dbReference type="Rhea" id="RHEA:50192"/>
        <dbReference type="Rhea" id="RHEA-COMP:9863"/>
        <dbReference type="Rhea" id="RHEA-COMP:12567"/>
        <dbReference type="ChEBI" id="CHEBI:15378"/>
        <dbReference type="ChEBI" id="CHEBI:29999"/>
        <dbReference type="ChEBI" id="CHEBI:57632"/>
        <dbReference type="ChEBI" id="CHEBI:58223"/>
        <dbReference type="ChEBI" id="CHEBI:132085"/>
        <dbReference type="EC" id="2.4.2.26"/>
    </reaction>
</comment>
<comment type="cofactor">
    <cofactor evidence="3">
        <name>a divalent metal cation</name>
        <dbReference type="ChEBI" id="CHEBI:60240"/>
    </cofactor>
</comment>
<comment type="pathway">
    <text evidence="3">Glycan metabolism; chondroitin sulfate biosynthesis.</text>
</comment>
<comment type="pathway">
    <text evidence="3">Glycan metabolism; heparan sulfate biosynthesis.</text>
</comment>
<comment type="subunit">
    <text evidence="3">Monomer.</text>
</comment>
<comment type="subcellular location">
    <subcellularLocation>
        <location evidence="3">Golgi apparatus membrane</location>
        <topology evidence="1">Single-pass type II membrane protein</topology>
    </subcellularLocation>
</comment>
<comment type="PTM">
    <text evidence="3">Contains 7 disulfide bonds.</text>
</comment>
<comment type="PTM">
    <text evidence="3">N-glycosylated.</text>
</comment>
<comment type="similarity">
    <text evidence="6">Belongs to the glycosyltransferase 14 family. XylT subfamily.</text>
</comment>
<gene>
    <name type="primary">XYLT1</name>
</gene>
<organism>
    <name type="scientific">Pan troglodytes</name>
    <name type="common">Chimpanzee</name>
    <dbReference type="NCBI Taxonomy" id="9598"/>
    <lineage>
        <taxon>Eukaryota</taxon>
        <taxon>Metazoa</taxon>
        <taxon>Chordata</taxon>
        <taxon>Craniata</taxon>
        <taxon>Vertebrata</taxon>
        <taxon>Euteleostomi</taxon>
        <taxon>Mammalia</taxon>
        <taxon>Eutheria</taxon>
        <taxon>Euarchontoglires</taxon>
        <taxon>Primates</taxon>
        <taxon>Haplorrhini</taxon>
        <taxon>Catarrhini</taxon>
        <taxon>Hominidae</taxon>
        <taxon>Pan</taxon>
    </lineage>
</organism>
<dbReference type="EC" id="2.4.2.26" evidence="3"/>
<dbReference type="EMBL" id="AJ866718">
    <property type="protein sequence ID" value="CAI28922.1"/>
    <property type="molecule type" value="mRNA"/>
</dbReference>
<dbReference type="RefSeq" id="NP_001032366.1">
    <property type="nucleotide sequence ID" value="NM_001037289.1"/>
</dbReference>
<dbReference type="SMR" id="Q5QQ57"/>
<dbReference type="STRING" id="9598.ENSPTRP00000013343"/>
<dbReference type="CAZy" id="GT14">
    <property type="family name" value="Glycosyltransferase Family 14"/>
</dbReference>
<dbReference type="GlyCosmos" id="Q5QQ57">
    <property type="glycosylation" value="3 sites, No reported glycans"/>
</dbReference>
<dbReference type="PaxDb" id="9598-ENSPTRP00000013343"/>
<dbReference type="GeneID" id="453955"/>
<dbReference type="KEGG" id="ptr:453955"/>
<dbReference type="CTD" id="64131"/>
<dbReference type="eggNOG" id="KOG0799">
    <property type="taxonomic scope" value="Eukaryota"/>
</dbReference>
<dbReference type="InParanoid" id="Q5QQ57"/>
<dbReference type="UniPathway" id="UPA00755"/>
<dbReference type="UniPathway" id="UPA00756"/>
<dbReference type="Proteomes" id="UP000002277">
    <property type="component" value="Unplaced"/>
</dbReference>
<dbReference type="GO" id="GO:0005615">
    <property type="term" value="C:extracellular space"/>
    <property type="evidence" value="ECO:0000250"/>
    <property type="project" value="UniProtKB"/>
</dbReference>
<dbReference type="GO" id="GO:0000137">
    <property type="term" value="C:Golgi cis cisterna"/>
    <property type="evidence" value="ECO:0000250"/>
    <property type="project" value="UniProtKB"/>
</dbReference>
<dbReference type="GO" id="GO:0000139">
    <property type="term" value="C:Golgi membrane"/>
    <property type="evidence" value="ECO:0000250"/>
    <property type="project" value="UniProtKB"/>
</dbReference>
<dbReference type="GO" id="GO:0046872">
    <property type="term" value="F:metal ion binding"/>
    <property type="evidence" value="ECO:0007669"/>
    <property type="project" value="UniProtKB-KW"/>
</dbReference>
<dbReference type="GO" id="GO:0030158">
    <property type="term" value="F:protein xylosyltransferase activity"/>
    <property type="evidence" value="ECO:0000250"/>
    <property type="project" value="UniProtKB"/>
</dbReference>
<dbReference type="GO" id="GO:0050650">
    <property type="term" value="P:chondroitin sulfate proteoglycan biosynthetic process"/>
    <property type="evidence" value="ECO:0000250"/>
    <property type="project" value="UniProtKB"/>
</dbReference>
<dbReference type="GO" id="GO:0048706">
    <property type="term" value="P:embryonic skeletal system development"/>
    <property type="evidence" value="ECO:0000250"/>
    <property type="project" value="UniProtKB"/>
</dbReference>
<dbReference type="GO" id="GO:0015012">
    <property type="term" value="P:heparan sulfate proteoglycan biosynthetic process"/>
    <property type="evidence" value="ECO:0000250"/>
    <property type="project" value="UniProtKB"/>
</dbReference>
<dbReference type="GO" id="GO:0043931">
    <property type="term" value="P:ossification involved in bone maturation"/>
    <property type="evidence" value="ECO:0000250"/>
    <property type="project" value="UniProtKB"/>
</dbReference>
<dbReference type="GO" id="GO:0030166">
    <property type="term" value="P:proteoglycan biosynthetic process"/>
    <property type="evidence" value="ECO:0000250"/>
    <property type="project" value="UniProtKB"/>
</dbReference>
<dbReference type="InterPro" id="IPR003406">
    <property type="entry name" value="Glyco_trans_14"/>
</dbReference>
<dbReference type="InterPro" id="IPR043538">
    <property type="entry name" value="XYLT"/>
</dbReference>
<dbReference type="InterPro" id="IPR024448">
    <property type="entry name" value="XylT_C"/>
</dbReference>
<dbReference type="PANTHER" id="PTHR46025:SF2">
    <property type="entry name" value="XYLOSYLTRANSFERASE 1"/>
    <property type="match status" value="1"/>
</dbReference>
<dbReference type="PANTHER" id="PTHR46025">
    <property type="entry name" value="XYLOSYLTRANSFERASE OXT"/>
    <property type="match status" value="1"/>
</dbReference>
<dbReference type="Pfam" id="PF02485">
    <property type="entry name" value="Branch"/>
    <property type="match status" value="1"/>
</dbReference>
<dbReference type="Pfam" id="PF12529">
    <property type="entry name" value="Xylo_C"/>
    <property type="match status" value="1"/>
</dbReference>
<name>XYLT1_PANTR</name>
<keyword id="KW-1015">Disulfide bond</keyword>
<keyword id="KW-0325">Glycoprotein</keyword>
<keyword id="KW-0328">Glycosyltransferase</keyword>
<keyword id="KW-0333">Golgi apparatus</keyword>
<keyword id="KW-0472">Membrane</keyword>
<keyword id="KW-0479">Metal-binding</keyword>
<keyword id="KW-1185">Reference proteome</keyword>
<keyword id="KW-0735">Signal-anchor</keyword>
<keyword id="KW-0808">Transferase</keyword>
<keyword id="KW-0812">Transmembrane</keyword>
<keyword id="KW-1133">Transmembrane helix</keyword>
<feature type="chain" id="PRO_0000191402" description="Xylosyltransferase 1">
    <location>
        <begin position="1"/>
        <end position="945"/>
    </location>
</feature>
<feature type="topological domain" description="Cytoplasmic" evidence="4">
    <location>
        <begin position="1"/>
        <end position="17"/>
    </location>
</feature>
<feature type="transmembrane region" description="Helical; Signal-anchor for type II membrane protein" evidence="4">
    <location>
        <begin position="18"/>
        <end position="38"/>
    </location>
</feature>
<feature type="topological domain" description="Lumenal" evidence="4">
    <location>
        <begin position="39"/>
        <end position="945"/>
    </location>
</feature>
<feature type="region of interest" description="Disordered" evidence="5">
    <location>
        <begin position="42"/>
        <end position="245"/>
    </location>
</feature>
<feature type="region of interest" description="Disordered" evidence="5">
    <location>
        <begin position="926"/>
        <end position="945"/>
    </location>
</feature>
<feature type="compositionally biased region" description="Gly residues" evidence="5">
    <location>
        <begin position="76"/>
        <end position="103"/>
    </location>
</feature>
<feature type="compositionally biased region" description="Basic and acidic residues" evidence="5">
    <location>
        <begin position="131"/>
        <end position="147"/>
    </location>
</feature>
<feature type="compositionally biased region" description="Polar residues" evidence="5">
    <location>
        <begin position="149"/>
        <end position="158"/>
    </location>
</feature>
<feature type="compositionally biased region" description="Basic and acidic residues" evidence="5">
    <location>
        <begin position="163"/>
        <end position="190"/>
    </location>
</feature>
<feature type="compositionally biased region" description="Basic and acidic residues" evidence="5">
    <location>
        <begin position="235"/>
        <end position="245"/>
    </location>
</feature>
<feature type="binding site" evidence="3">
    <location>
        <position position="319"/>
    </location>
    <ligand>
        <name>UDP-alpha-D-xylose</name>
        <dbReference type="ChEBI" id="CHEBI:57632"/>
    </ligand>
</feature>
<feature type="binding site" evidence="3">
    <location>
        <position position="347"/>
    </location>
    <ligand>
        <name>UDP-alpha-D-xylose</name>
        <dbReference type="ChEBI" id="CHEBI:57632"/>
    </ligand>
</feature>
<feature type="binding site" evidence="3">
    <location>
        <begin position="376"/>
        <end position="378"/>
    </location>
    <ligand>
        <name>UDP-alpha-D-xylose</name>
        <dbReference type="ChEBI" id="CHEBI:57632"/>
    </ligand>
</feature>
<feature type="binding site" evidence="3">
    <location>
        <begin position="480"/>
        <end position="481"/>
    </location>
    <ligand>
        <name>UDP-alpha-D-xylose</name>
        <dbReference type="ChEBI" id="CHEBI:57632"/>
    </ligand>
</feature>
<feature type="binding site" evidence="3">
    <location>
        <position position="561"/>
    </location>
    <ligand>
        <name>UDP-alpha-D-xylose</name>
        <dbReference type="ChEBI" id="CHEBI:57632"/>
    </ligand>
</feature>
<feature type="binding site" evidence="3">
    <location>
        <begin position="584"/>
        <end position="585"/>
    </location>
    <ligand>
        <name>UDP-alpha-D-xylose</name>
        <dbReference type="ChEBI" id="CHEBI:57632"/>
    </ligand>
</feature>
<feature type="glycosylation site" description="N-linked (GlcNAc...) asparagine" evidence="4">
    <location>
        <position position="212"/>
    </location>
</feature>
<feature type="glycosylation site" description="N-linked (GlcNAc...) asparagine" evidence="4">
    <location>
        <position position="407"/>
    </location>
</feature>
<feature type="glycosylation site" description="N-linked (GlcNAc...) asparagine" evidence="4">
    <location>
        <position position="763"/>
    </location>
</feature>
<feature type="disulfide bond" evidence="3">
    <location>
        <begin position="243"/>
        <end position="271"/>
    </location>
</feature>
<feature type="disulfide bond" evidence="3">
    <location>
        <begin position="287"/>
        <end position="528"/>
    </location>
</feature>
<feature type="disulfide bond" evidence="3">
    <location>
        <begin position="547"/>
        <end position="560"/>
    </location>
</feature>
<feature type="disulfide bond" evidence="3">
    <location>
        <begin position="549"/>
        <end position="558"/>
    </location>
</feature>
<feature type="disulfide bond" evidence="3">
    <location>
        <begin position="661"/>
        <end position="913"/>
    </location>
</feature>
<feature type="disulfide bond" evidence="3">
    <location>
        <begin position="906"/>
        <end position="919"/>
    </location>
</feature>
<proteinExistence type="evidence at transcript level"/>
<reference key="1">
    <citation type="submission" date="2004-11" db="EMBL/GenBank/DDBJ databases">
        <title>Phylogeny of animal protein xylosyltransferases.</title>
        <authorList>
            <person name="Ouzzine M."/>
            <person name="Fournel-Gigleux S."/>
            <person name="Mollicone R."/>
            <person name="Oriol R."/>
        </authorList>
    </citation>
    <scope>NUCLEOTIDE SEQUENCE [MRNA]</scope>
</reference>
<accession>Q5QQ57</accession>